<evidence type="ECO:0000250" key="1"/>
<evidence type="ECO:0000250" key="2">
    <source>
        <dbReference type="UniProtKB" id="P02994"/>
    </source>
</evidence>
<evidence type="ECO:0000305" key="3"/>
<dbReference type="EMBL" id="X54730">
    <property type="protein sequence ID" value="CAA38529.1"/>
    <property type="molecule type" value="Genomic_DNA"/>
</dbReference>
<dbReference type="PIR" id="S35894">
    <property type="entry name" value="S35894"/>
</dbReference>
<dbReference type="SMR" id="P28295"/>
<dbReference type="GO" id="GO:0005737">
    <property type="term" value="C:cytoplasm"/>
    <property type="evidence" value="ECO:0007669"/>
    <property type="project" value="UniProtKB-SubCell"/>
</dbReference>
<dbReference type="GO" id="GO:0005525">
    <property type="term" value="F:GTP binding"/>
    <property type="evidence" value="ECO:0007669"/>
    <property type="project" value="UniProtKB-KW"/>
</dbReference>
<dbReference type="GO" id="GO:0003924">
    <property type="term" value="F:GTPase activity"/>
    <property type="evidence" value="ECO:0007669"/>
    <property type="project" value="InterPro"/>
</dbReference>
<dbReference type="GO" id="GO:0003746">
    <property type="term" value="F:translation elongation factor activity"/>
    <property type="evidence" value="ECO:0007669"/>
    <property type="project" value="UniProtKB-KW"/>
</dbReference>
<dbReference type="CDD" id="cd01883">
    <property type="entry name" value="EF1_alpha"/>
    <property type="match status" value="1"/>
</dbReference>
<dbReference type="CDD" id="cd03693">
    <property type="entry name" value="EF1_alpha_II"/>
    <property type="match status" value="1"/>
</dbReference>
<dbReference type="CDD" id="cd03705">
    <property type="entry name" value="EF1_alpha_III"/>
    <property type="match status" value="1"/>
</dbReference>
<dbReference type="FunFam" id="2.40.30.10:FF:000003">
    <property type="entry name" value="Elongation factor 1-alpha"/>
    <property type="match status" value="1"/>
</dbReference>
<dbReference type="FunFam" id="2.40.30.10:FF:000005">
    <property type="entry name" value="Elongation factor 1-alpha"/>
    <property type="match status" value="1"/>
</dbReference>
<dbReference type="FunFam" id="3.40.50.300:FF:000211">
    <property type="entry name" value="Elongation factor 1-alpha"/>
    <property type="match status" value="1"/>
</dbReference>
<dbReference type="Gene3D" id="3.40.50.300">
    <property type="entry name" value="P-loop containing nucleotide triphosphate hydrolases"/>
    <property type="match status" value="1"/>
</dbReference>
<dbReference type="Gene3D" id="2.40.30.10">
    <property type="entry name" value="Translation factors"/>
    <property type="match status" value="2"/>
</dbReference>
<dbReference type="HAMAP" id="MF_00118_A">
    <property type="entry name" value="EF_Tu_A"/>
    <property type="match status" value="1"/>
</dbReference>
<dbReference type="InterPro" id="IPR004161">
    <property type="entry name" value="EFTu-like_2"/>
</dbReference>
<dbReference type="InterPro" id="IPR031157">
    <property type="entry name" value="G_TR_CS"/>
</dbReference>
<dbReference type="InterPro" id="IPR054696">
    <property type="entry name" value="GTP-eEF1A_C"/>
</dbReference>
<dbReference type="InterPro" id="IPR027417">
    <property type="entry name" value="P-loop_NTPase"/>
</dbReference>
<dbReference type="InterPro" id="IPR000795">
    <property type="entry name" value="T_Tr_GTP-bd_dom"/>
</dbReference>
<dbReference type="InterPro" id="IPR050100">
    <property type="entry name" value="TRAFAC_GTPase_members"/>
</dbReference>
<dbReference type="InterPro" id="IPR009000">
    <property type="entry name" value="Transl_B-barrel_sf"/>
</dbReference>
<dbReference type="InterPro" id="IPR009001">
    <property type="entry name" value="Transl_elong_EF1A/Init_IF2_C"/>
</dbReference>
<dbReference type="InterPro" id="IPR004539">
    <property type="entry name" value="Transl_elong_EF1A_euk/arc"/>
</dbReference>
<dbReference type="NCBIfam" id="TIGR00483">
    <property type="entry name" value="EF-1_alpha"/>
    <property type="match status" value="1"/>
</dbReference>
<dbReference type="NCBIfam" id="NF008969">
    <property type="entry name" value="PRK12317.1"/>
    <property type="match status" value="1"/>
</dbReference>
<dbReference type="PANTHER" id="PTHR23115">
    <property type="entry name" value="TRANSLATION FACTOR"/>
    <property type="match status" value="1"/>
</dbReference>
<dbReference type="Pfam" id="PF22594">
    <property type="entry name" value="GTP-eEF1A_C"/>
    <property type="match status" value="1"/>
</dbReference>
<dbReference type="Pfam" id="PF00009">
    <property type="entry name" value="GTP_EFTU"/>
    <property type="match status" value="1"/>
</dbReference>
<dbReference type="Pfam" id="PF03144">
    <property type="entry name" value="GTP_EFTU_D2"/>
    <property type="match status" value="1"/>
</dbReference>
<dbReference type="PRINTS" id="PR00315">
    <property type="entry name" value="ELONGATNFCT"/>
</dbReference>
<dbReference type="SUPFAM" id="SSF50465">
    <property type="entry name" value="EF-Tu/eEF-1alpha/eIF2-gamma C-terminal domain"/>
    <property type="match status" value="1"/>
</dbReference>
<dbReference type="SUPFAM" id="SSF52540">
    <property type="entry name" value="P-loop containing nucleoside triphosphate hydrolases"/>
    <property type="match status" value="1"/>
</dbReference>
<dbReference type="SUPFAM" id="SSF50447">
    <property type="entry name" value="Translation proteins"/>
    <property type="match status" value="1"/>
</dbReference>
<dbReference type="PROSITE" id="PS00301">
    <property type="entry name" value="G_TR_1"/>
    <property type="match status" value="1"/>
</dbReference>
<dbReference type="PROSITE" id="PS51722">
    <property type="entry name" value="G_TR_2"/>
    <property type="match status" value="1"/>
</dbReference>
<feature type="initiator methionine" description="Removed" evidence="2">
    <location>
        <position position="1"/>
    </location>
</feature>
<feature type="chain" id="PRO_0000090949" description="Elongation factor 1-alpha">
    <location>
        <begin position="2"/>
        <end position="458"/>
    </location>
</feature>
<feature type="domain" description="tr-type G">
    <location>
        <begin position="5"/>
        <end position="240"/>
    </location>
</feature>
<feature type="region of interest" description="G1" evidence="1">
    <location>
        <begin position="14"/>
        <end position="21"/>
    </location>
</feature>
<feature type="region of interest" description="G2" evidence="1">
    <location>
        <begin position="70"/>
        <end position="74"/>
    </location>
</feature>
<feature type="region of interest" description="G3" evidence="1">
    <location>
        <begin position="91"/>
        <end position="94"/>
    </location>
</feature>
<feature type="region of interest" description="G4" evidence="1">
    <location>
        <begin position="153"/>
        <end position="156"/>
    </location>
</feature>
<feature type="region of interest" description="G5" evidence="1">
    <location>
        <begin position="192"/>
        <end position="194"/>
    </location>
</feature>
<feature type="binding site" evidence="1">
    <location>
        <begin position="14"/>
        <end position="21"/>
    </location>
    <ligand>
        <name>GTP</name>
        <dbReference type="ChEBI" id="CHEBI:37565"/>
    </ligand>
</feature>
<feature type="binding site" evidence="1">
    <location>
        <begin position="91"/>
        <end position="95"/>
    </location>
    <ligand>
        <name>GTP</name>
        <dbReference type="ChEBI" id="CHEBI:37565"/>
    </ligand>
</feature>
<feature type="binding site" evidence="1">
    <location>
        <begin position="153"/>
        <end position="156"/>
    </location>
    <ligand>
        <name>GTP</name>
        <dbReference type="ChEBI" id="CHEBI:37565"/>
    </ligand>
</feature>
<feature type="modified residue" description="N,N,N-trimethylglycine" evidence="2">
    <location>
        <position position="2"/>
    </location>
</feature>
<feature type="modified residue" description="N6,N6-dimethyllysine; alternate" evidence="2">
    <location>
        <position position="3"/>
    </location>
</feature>
<feature type="modified residue" description="N6-methyllysine; alternate" evidence="2">
    <location>
        <position position="3"/>
    </location>
</feature>
<feature type="modified residue" description="N6-methyllysine" evidence="2">
    <location>
        <position position="30"/>
    </location>
</feature>
<feature type="modified residue" description="N6,N6,N6-trimethyllysine" evidence="2">
    <location>
        <position position="79"/>
    </location>
</feature>
<feature type="modified residue" description="N6,N6-dimethyllysine; alternate" evidence="2">
    <location>
        <position position="316"/>
    </location>
</feature>
<feature type="modified residue" description="N6-methyllysine; alternate" evidence="2">
    <location>
        <position position="316"/>
    </location>
</feature>
<feature type="modified residue" description="N6-methyllysine" evidence="2">
    <location>
        <position position="390"/>
    </location>
</feature>
<sequence length="458" mass="49829">MGKEKTHVNVVVIGHVDSGKSTTTGHLIYKCGGIDKRTIEKFEKEAAELGKGSFKYAWVLDKLKAERERGITIDIALWKFETPKYHVTVIDAPGHRDFIKNMITGTSQADCGILIIAAGTGEFEAGISKDGQTREHALLAFTLGVRQLIVAINKMDSTKWSEQRFNEIIKEVSGFIKKIGFNPKSVPFVPISGWHGDNMLEESTNMPWYKGWNKETKAGAKSGKTLLDAIDAIDPPQRPSDKPLRLPLQDVYKIGGIGTVPVGRVETGVIKAGMVVTFAPANVTTEVKSVEMHHEQLVEGLPGDNVGFNVKNVSVKDIRRGNVCSDSKNDPAKEAGSFTAQVIVLNHPGQIGAGYAPVLDCHTAHIACKFAELLEKIDRRSGKKLEDAPKFVKSGDSAIVKMIPSKPMCVEAYTDYPPLGRFAVRDMRQTVAVGVIKAVEKVDKAGKVTKAAAKAGEK</sequence>
<proteinExistence type="inferred from homology"/>
<reference key="1">
    <citation type="journal article" date="1995" name="Microbiol. Res.">
        <title>Analysis of the gene for the elongation factor 1 alpha from the zygomycete Absidia glauca. Use of the promoter region for constructions of transformation vectors.</title>
        <authorList>
            <person name="Burmester A."/>
        </authorList>
    </citation>
    <scope>NUCLEOTIDE SEQUENCE [GENOMIC DNA]</scope>
    <source>
        <strain>CBS 101.48</strain>
    </source>
</reference>
<gene>
    <name type="primary">TEF-1</name>
</gene>
<organism>
    <name type="scientific">Absidia glauca</name>
    <name type="common">Pin mould</name>
    <dbReference type="NCBI Taxonomy" id="4829"/>
    <lineage>
        <taxon>Eukaryota</taxon>
        <taxon>Fungi</taxon>
        <taxon>Fungi incertae sedis</taxon>
        <taxon>Mucoromycota</taxon>
        <taxon>Mucoromycotina</taxon>
        <taxon>Mucoromycetes</taxon>
        <taxon>Mucorales</taxon>
        <taxon>Cunninghamellaceae</taxon>
        <taxon>Absidia</taxon>
    </lineage>
</organism>
<accession>P28295</accession>
<comment type="function">
    <text>This protein promotes the GTP-dependent binding of aminoacyl-tRNA to the A-site of ribosomes during protein biosynthesis.</text>
</comment>
<comment type="subcellular location">
    <subcellularLocation>
        <location>Cytoplasm</location>
    </subcellularLocation>
</comment>
<comment type="similarity">
    <text evidence="3">Belongs to the TRAFAC class translation factor GTPase superfamily. Classic translation factor GTPase family. EF-Tu/EF-1A subfamily.</text>
</comment>
<protein>
    <recommendedName>
        <fullName>Elongation factor 1-alpha</fullName>
        <shortName>EF-1-alpha</shortName>
    </recommendedName>
</protein>
<keyword id="KW-0963">Cytoplasm</keyword>
<keyword id="KW-0251">Elongation factor</keyword>
<keyword id="KW-0342">GTP-binding</keyword>
<keyword id="KW-0488">Methylation</keyword>
<keyword id="KW-0547">Nucleotide-binding</keyword>
<keyword id="KW-0648">Protein biosynthesis</keyword>
<name>EF1A_ABSGL</name>